<gene>
    <name evidence="1" type="primary">frr</name>
    <name type="ordered locus">XAC1418</name>
</gene>
<name>RRF_XANAC</name>
<protein>
    <recommendedName>
        <fullName evidence="1">Ribosome-recycling factor</fullName>
        <shortName evidence="1">RRF</shortName>
    </recommendedName>
    <alternativeName>
        <fullName evidence="1">Ribosome-releasing factor</fullName>
    </alternativeName>
</protein>
<reference key="1">
    <citation type="journal article" date="2002" name="Nature">
        <title>Comparison of the genomes of two Xanthomonas pathogens with differing host specificities.</title>
        <authorList>
            <person name="da Silva A.C.R."/>
            <person name="Ferro J.A."/>
            <person name="Reinach F.C."/>
            <person name="Farah C.S."/>
            <person name="Furlan L.R."/>
            <person name="Quaggio R.B."/>
            <person name="Monteiro-Vitorello C.B."/>
            <person name="Van Sluys M.A."/>
            <person name="Almeida N.F. Jr."/>
            <person name="Alves L.M.C."/>
            <person name="do Amaral A.M."/>
            <person name="Bertolini M.C."/>
            <person name="Camargo L.E.A."/>
            <person name="Camarotte G."/>
            <person name="Cannavan F."/>
            <person name="Cardozo J."/>
            <person name="Chambergo F."/>
            <person name="Ciapina L.P."/>
            <person name="Cicarelli R.M.B."/>
            <person name="Coutinho L.L."/>
            <person name="Cursino-Santos J.R."/>
            <person name="El-Dorry H."/>
            <person name="Faria J.B."/>
            <person name="Ferreira A.J.S."/>
            <person name="Ferreira R.C.C."/>
            <person name="Ferro M.I.T."/>
            <person name="Formighieri E.F."/>
            <person name="Franco M.C."/>
            <person name="Greggio C.C."/>
            <person name="Gruber A."/>
            <person name="Katsuyama A.M."/>
            <person name="Kishi L.T."/>
            <person name="Leite R.P."/>
            <person name="Lemos E.G.M."/>
            <person name="Lemos M.V.F."/>
            <person name="Locali E.C."/>
            <person name="Machado M.A."/>
            <person name="Madeira A.M.B.N."/>
            <person name="Martinez-Rossi N.M."/>
            <person name="Martins E.C."/>
            <person name="Meidanis J."/>
            <person name="Menck C.F.M."/>
            <person name="Miyaki C.Y."/>
            <person name="Moon D.H."/>
            <person name="Moreira L.M."/>
            <person name="Novo M.T.M."/>
            <person name="Okura V.K."/>
            <person name="Oliveira M.C."/>
            <person name="Oliveira V.R."/>
            <person name="Pereira H.A."/>
            <person name="Rossi A."/>
            <person name="Sena J.A.D."/>
            <person name="Silva C."/>
            <person name="de Souza R.F."/>
            <person name="Spinola L.A.F."/>
            <person name="Takita M.A."/>
            <person name="Tamura R.E."/>
            <person name="Teixeira E.C."/>
            <person name="Tezza R.I.D."/>
            <person name="Trindade dos Santos M."/>
            <person name="Truffi D."/>
            <person name="Tsai S.M."/>
            <person name="White F.F."/>
            <person name="Setubal J.C."/>
            <person name="Kitajima J.P."/>
        </authorList>
    </citation>
    <scope>NUCLEOTIDE SEQUENCE [LARGE SCALE GENOMIC DNA]</scope>
    <source>
        <strain>306</strain>
    </source>
</reference>
<evidence type="ECO:0000255" key="1">
    <source>
        <dbReference type="HAMAP-Rule" id="MF_00040"/>
    </source>
</evidence>
<sequence>MLTQIKQDAQTRMTKSIDALRHSLTTIRTGRASPALLDGIKVKAYGADTPLNQVASISVSEGRSLVISLFDKGMIKDVEKAIYASDLGLTPTVVGTVIRLNLPPLTEERRKELSKSVHGEGEDSKVAIRNIRRDANQQVKDLLKDKAVTEDEARSAEDDIQKLTDKAIKDVDEVVKGKEQELMTV</sequence>
<accession>Q8PMK8</accession>
<proteinExistence type="inferred from homology"/>
<keyword id="KW-0963">Cytoplasm</keyword>
<keyword id="KW-0648">Protein biosynthesis</keyword>
<feature type="chain" id="PRO_0000167582" description="Ribosome-recycling factor">
    <location>
        <begin position="1"/>
        <end position="185"/>
    </location>
</feature>
<dbReference type="EMBL" id="AE008923">
    <property type="protein sequence ID" value="AAM36289.1"/>
    <property type="molecule type" value="Genomic_DNA"/>
</dbReference>
<dbReference type="RefSeq" id="WP_005921623.1">
    <property type="nucleotide sequence ID" value="NC_003919.1"/>
</dbReference>
<dbReference type="SMR" id="Q8PMK8"/>
<dbReference type="GeneID" id="97509772"/>
<dbReference type="KEGG" id="xac:XAC1418"/>
<dbReference type="eggNOG" id="COG0233">
    <property type="taxonomic scope" value="Bacteria"/>
</dbReference>
<dbReference type="HOGENOM" id="CLU_073981_2_0_6"/>
<dbReference type="Proteomes" id="UP000000576">
    <property type="component" value="Chromosome"/>
</dbReference>
<dbReference type="GO" id="GO:0005829">
    <property type="term" value="C:cytosol"/>
    <property type="evidence" value="ECO:0007669"/>
    <property type="project" value="GOC"/>
</dbReference>
<dbReference type="GO" id="GO:0043023">
    <property type="term" value="F:ribosomal large subunit binding"/>
    <property type="evidence" value="ECO:0007669"/>
    <property type="project" value="TreeGrafter"/>
</dbReference>
<dbReference type="GO" id="GO:0002184">
    <property type="term" value="P:cytoplasmic translational termination"/>
    <property type="evidence" value="ECO:0007669"/>
    <property type="project" value="TreeGrafter"/>
</dbReference>
<dbReference type="CDD" id="cd00520">
    <property type="entry name" value="RRF"/>
    <property type="match status" value="1"/>
</dbReference>
<dbReference type="FunFam" id="1.10.132.20:FF:000001">
    <property type="entry name" value="Ribosome-recycling factor"/>
    <property type="match status" value="1"/>
</dbReference>
<dbReference type="FunFam" id="3.30.1360.40:FF:000001">
    <property type="entry name" value="Ribosome-recycling factor"/>
    <property type="match status" value="1"/>
</dbReference>
<dbReference type="Gene3D" id="3.30.1360.40">
    <property type="match status" value="1"/>
</dbReference>
<dbReference type="Gene3D" id="1.10.132.20">
    <property type="entry name" value="Ribosome-recycling factor"/>
    <property type="match status" value="1"/>
</dbReference>
<dbReference type="HAMAP" id="MF_00040">
    <property type="entry name" value="RRF"/>
    <property type="match status" value="1"/>
</dbReference>
<dbReference type="InterPro" id="IPR002661">
    <property type="entry name" value="Ribosome_recyc_fac"/>
</dbReference>
<dbReference type="InterPro" id="IPR023584">
    <property type="entry name" value="Ribosome_recyc_fac_dom"/>
</dbReference>
<dbReference type="InterPro" id="IPR036191">
    <property type="entry name" value="RRF_sf"/>
</dbReference>
<dbReference type="NCBIfam" id="TIGR00496">
    <property type="entry name" value="frr"/>
    <property type="match status" value="1"/>
</dbReference>
<dbReference type="PANTHER" id="PTHR20982:SF3">
    <property type="entry name" value="MITOCHONDRIAL RIBOSOME RECYCLING FACTOR PSEUDO 1"/>
    <property type="match status" value="1"/>
</dbReference>
<dbReference type="PANTHER" id="PTHR20982">
    <property type="entry name" value="RIBOSOME RECYCLING FACTOR"/>
    <property type="match status" value="1"/>
</dbReference>
<dbReference type="Pfam" id="PF01765">
    <property type="entry name" value="RRF"/>
    <property type="match status" value="1"/>
</dbReference>
<dbReference type="SUPFAM" id="SSF55194">
    <property type="entry name" value="Ribosome recycling factor, RRF"/>
    <property type="match status" value="1"/>
</dbReference>
<comment type="function">
    <text evidence="1">Responsible for the release of ribosomes from messenger RNA at the termination of protein biosynthesis. May increase the efficiency of translation by recycling ribosomes from one round of translation to another.</text>
</comment>
<comment type="subcellular location">
    <subcellularLocation>
        <location evidence="1">Cytoplasm</location>
    </subcellularLocation>
</comment>
<comment type="similarity">
    <text evidence="1">Belongs to the RRF family.</text>
</comment>
<organism>
    <name type="scientific">Xanthomonas axonopodis pv. citri (strain 306)</name>
    <dbReference type="NCBI Taxonomy" id="190486"/>
    <lineage>
        <taxon>Bacteria</taxon>
        <taxon>Pseudomonadati</taxon>
        <taxon>Pseudomonadota</taxon>
        <taxon>Gammaproteobacteria</taxon>
        <taxon>Lysobacterales</taxon>
        <taxon>Lysobacteraceae</taxon>
        <taxon>Xanthomonas</taxon>
    </lineage>
</organism>